<organismHost>
    <name type="scientific">Abrothrix longipilis</name>
    <name type="common">Long-haired grass mouse</name>
    <name type="synonym">Akodon longipilis</name>
    <dbReference type="NCBI Taxonomy" id="29094"/>
</organismHost>
<organismHost>
    <name type="scientific">Homo sapiens</name>
    <name type="common">Human</name>
    <dbReference type="NCBI Taxonomy" id="9606"/>
</organismHost>
<organismHost>
    <name type="scientific">Loxodontomys micropus</name>
    <name type="common">Southern big-eared mouse</name>
    <name type="synonym">Auliscomys micropus</name>
    <dbReference type="NCBI Taxonomy" id="89122"/>
</organismHost>
<organismHost>
    <name type="scientific">Oligoryzomys chacoensis</name>
    <name type="common">Chacoan pygmy rice rat</name>
    <dbReference type="NCBI Taxonomy" id="37015"/>
</organismHost>
<organismHost>
    <name type="scientific">Oligoryzomys flavescens</name>
    <name type="common">yellow pygmy rice rat</name>
    <dbReference type="NCBI Taxonomy" id="218824"/>
</organismHost>
<organismHost>
    <name type="scientific">Oligoryzomys longicaudatus</name>
    <name type="common">Long-tailed pygmy rice rat</name>
    <dbReference type="NCBI Taxonomy" id="137207"/>
</organismHost>
<organismHost>
    <name type="scientific">Oligoryzomys sp.</name>
    <dbReference type="NCBI Taxonomy" id="37019"/>
</organismHost>
<proteinExistence type="evidence at protein level"/>
<keyword id="KW-0002">3D-structure</keyword>
<keyword id="KW-0143">Chaperone</keyword>
<keyword id="KW-0175">Coiled coil</keyword>
<keyword id="KW-0255">Endonuclease</keyword>
<keyword id="KW-1035">Host cytoplasm</keyword>
<keyword id="KW-1040">Host Golgi apparatus</keyword>
<keyword id="KW-0945">Host-virus interaction</keyword>
<keyword id="KW-0378">Hydrolase</keyword>
<keyword id="KW-1090">Inhibition of host innate immune response by virus</keyword>
<keyword id="KW-1113">Inhibition of host RLR pathway by virus</keyword>
<keyword id="KW-0540">Nuclease</keyword>
<keyword id="KW-0597">Phosphoprotein</keyword>
<keyword id="KW-0687">Ribonucleoprotein</keyword>
<keyword id="KW-0694">RNA-binding</keyword>
<keyword id="KW-0899">Viral immunoevasion</keyword>
<keyword id="KW-0543">Viral nucleoprotein</keyword>
<keyword id="KW-0946">Virion</keyword>
<accession>O36307</accession>
<accession>Q80DP9</accession>
<reference key="1">
    <citation type="journal article" date="1997" name="Virus Res.">
        <title>Genetic characterization and phylogeny of Andes virus and variants from Argentina and Chile.</title>
        <authorList>
            <person name="Lopez N."/>
            <person name="Padula P."/>
            <person name="Rossi C."/>
            <person name="Miguel S."/>
            <person name="Edelstein A."/>
            <person name="Ramirez E."/>
            <person name="Franze-Fernandez M.T."/>
        </authorList>
    </citation>
    <scope>NUCLEOTIDE SEQUENCE [GENOMIC RNA]</scope>
    <source>
        <strain>AH-1</strain>
    </source>
</reference>
<reference key="2">
    <citation type="journal article" date="2002" name="J. Gen. Virol.">
        <title>Complete nucleotide sequence of the M RNA segment of Andes virus and analysis of the variability of the termini of the virus S, M and L RNA segments.</title>
        <authorList>
            <person name="Padula P.J."/>
            <person name="Sanchez A.J."/>
            <person name="Edelstein A."/>
            <person name="Nichol S.T."/>
        </authorList>
    </citation>
    <scope>NUCLEOTIDE SEQUENCE [GENOMIC RNA]</scope>
    <source>
        <strain>AH-1</strain>
    </source>
</reference>
<reference key="3">
    <citation type="journal article" date="2002" name="J. Virol.">
        <title>Analysis of hantavirus genetic diversity in Argentina: S segment-derived phylogeny.</title>
        <authorList>
            <person name="Bohlman M.C."/>
            <person name="Morzunov S.P."/>
            <person name="Meissner J."/>
            <person name="Taylor M.B."/>
            <person name="Ishibashi K."/>
            <person name="Rowe J."/>
            <person name="Levis S."/>
            <person name="Enria D."/>
            <person name="St Jeor S.C."/>
        </authorList>
    </citation>
    <scope>NUCLEOTIDE SEQUENCE [GENOMIC RNA]</scope>
    <source>
        <strain>Chile-9717869</strain>
    </source>
</reference>
<reference key="4">
    <citation type="journal article" date="2002" name="Virus Res.">
        <title>Complete nucleotide sequence of a Chilean hantavirus.</title>
        <authorList>
            <person name="Meissner J.D."/>
            <person name="Rowe J.E."/>
            <person name="Borucki M.K."/>
            <person name="St Jeor S.C."/>
        </authorList>
    </citation>
    <scope>NUCLEOTIDE SEQUENCE [GENOMIC RNA]</scope>
    <source>
        <strain>Chile-9717869</strain>
    </source>
</reference>
<reference key="5">
    <citation type="journal article" date="2003" name="Biol. Res.">
        <title>Complete sequence of the genome of the human isolate of Andes virus CHI-7913: comparative sequence and protein structure analysis.</title>
        <authorList>
            <person name="Tischler N.D."/>
            <person name="Fernandez J."/>
            <person name="Muller I."/>
            <person name="Martinez R."/>
            <person name="Galeno H."/>
            <person name="Villagra E."/>
            <person name="Mora J."/>
            <person name="Ramirez E."/>
            <person name="Rosemblatt M."/>
            <person name="Valenzuela P.D."/>
        </authorList>
    </citation>
    <scope>NUCLEOTIDE SEQUENCE [GENOMIC RNA]</scope>
    <source>
        <strain>CHI-7913</strain>
    </source>
</reference>
<reference key="6">
    <citation type="submission" date="2019-07" db="EMBL/GenBank/DDBJ databases">
        <title>A lethal person-to-person outbreak of Andes virus Hantavirus Pulmonary Syndrome was driven by super-spreader transmission events.</title>
        <authorList>
            <person name="Martinez V.P."/>
            <person name="Perez-Sautu U."/>
            <person name="Alonso D.O."/>
            <person name="Di Paola N."/>
            <person name="Bellomo C.M."/>
            <person name="Iglesias A.A."/>
            <person name="Coelho R.M."/>
            <person name="Periolo N."/>
            <person name="Nagle E.R."/>
            <person name="Chitty J.A."/>
            <person name="Pratt C.B."/>
            <person name="Wiley M.R."/>
            <person name="Diaz J."/>
            <person name="Biondo E."/>
            <person name="Lewis L."/>
            <person name="Anselmo C."/>
            <person name="Pontoriero F."/>
            <person name="Lavarra E."/>
            <person name="Kuhn J.H."/>
            <person name="Sanchez-Lockhart M."/>
            <person name="Edelstein A."/>
            <person name="Cisterna D."/>
            <person name="Campos J."/>
            <person name="Kaler M."/>
            <person name="Rubinstein A."/>
            <person name="Perandones C."/>
            <person name="Palacios G."/>
        </authorList>
    </citation>
    <scope>NUCLEOTIDE SEQUENCE [GENOMIC RNA]</scope>
    <source>
        <strain evidence="16">Epilink/96_2/6/19</strain>
        <strain evidence="22">Epuyen/18-19_Patient_10_12/10/18</strain>
        <strain evidence="23">Epuyen/18-19_Patient_11_12/15/18</strain>
        <strain evidence="24">Epuyen/18-19_Patient_12_12/19/18</strain>
        <strain evidence="25">Epuyen/18-19_Patient_13_12/24/18</strain>
        <strain evidence="26">Epuyen/18-19_Patient_14_12/26/18</strain>
        <strain evidence="27">Epuyen/18-19_Patient_15_12/26/18</strain>
        <strain evidence="28">Epuyen/18-19_Patient_16_12/28/18</strain>
        <strain evidence="29">Epuyen/18-19_Patient_17_12/31/18</strain>
        <strain evidence="30">Epuyen/18-19_Patient_18_12/31/18</strain>
        <strain evidence="31">Epuyen/18-19_Patient_19_1/2/19</strain>
        <strain evidence="32">Epuyen/18-19_Patient_1_11/3/18</strain>
        <strain evidence="33">Epuyen/18-19_Patient_20_1/1/19</strain>
        <strain evidence="34">Epuyen/18-19_Patient_22_1/1/19</strain>
        <strain evidence="35">Epuyen/18-19_Patient_23_1/7/19</strain>
        <strain evidence="36">Epuyen/18-19_Patient_24_1/3/19</strain>
        <strain evidence="37">Epuyen/18-19_Patient_25_1/6/19</strain>
        <strain evidence="38">Epuyen/18-19_Patient_26_1/4/19</strain>
        <strain evidence="39">Epuyen/18-19_Patient_27_1/8/19</strain>
        <strain evidence="40">Epuyen/18-19_Patient_28_1/6/19</strain>
        <strain evidence="41">Epuyen/18-19_Patient_29_1/14/19</strain>
        <strain evidence="42">Epuyen/18-19_Patient_2_11/23/18</strain>
        <strain evidence="43">Epuyen/18-19_Patient_3_11/20/18</strain>
        <strain evidence="44">Epuyen/18-19_Patient_4_11/27/18</strain>
        <strain evidence="45">Epuyen/18-19_Patient_5_11/26/18</strain>
        <strain evidence="46">Epuyen/18-19_Patient_6_11/25/18</strain>
        <strain evidence="47">Epuyen/18-19_Patient_8_12/13/18</strain>
        <strain evidence="48">Epuyen/18-19_Patient_9_12/12/18</strain>
        <strain evidence="17">NRC-2/97_06/01/1996</strain>
        <strain evidence="18">NRC-3/18_06/01/1997</strain>
        <strain evidence="19">NRC-4/18_06/01/2018</strain>
        <strain evidence="20">NRC-5/18_06/01/2018</strain>
        <strain evidence="21">NRC-6/18_05/21/18</strain>
    </source>
</reference>
<reference key="7">
    <citation type="journal article" date="2020" name="Emerg. Infect. Dis.">
        <title>Person-to-Person Transmission of Andes Virus in Hantavirus Pulmonary Syndrome, Argentina, 2014.</title>
        <authorList>
            <person name="Alonso D.O."/>
            <person name="Perez-Sautu U."/>
            <person name="Bellomo C.M."/>
            <person name="Prieto K."/>
            <person name="Iglesias A."/>
            <person name="Coelho R."/>
            <person name="Periolo N."/>
            <person name="Domenech I."/>
            <person name="Talmon G."/>
            <person name="Hansen R."/>
            <person name="Palacios G."/>
            <person name="Martinez V.P."/>
        </authorList>
    </citation>
    <scope>NUCLEOTIDE SEQUENCE [GENOMIC RNA]</scope>
    <source>
        <strain evidence="12">AREB14/P1</strain>
        <strain evidence="13">AREB14/P2</strain>
        <strain evidence="14">AREB14/P3</strain>
        <strain evidence="15">ARLA17/NRC2</strain>
    </source>
</reference>
<reference key="8">
    <citation type="journal article" date="2014" name="MBio">
        <title>An innate immunity-regulating virulence determinant is uniquely encoded by the Andes virus nucleocapsid protein.</title>
        <authorList>
            <person name="Cimica V."/>
            <person name="Dalrymple N.A."/>
            <person name="Roth E."/>
            <person name="Nasonov A."/>
            <person name="Mackow E.R."/>
        </authorList>
    </citation>
    <scope>FUNCTION</scope>
</reference>
<reference key="9">
    <citation type="journal article" date="2015" name="J. Virol.">
        <title>Andes virus nucleocapsid protein interrupts protein kinase R dimerization to counteract host interference in viral protein synthesis.</title>
        <authorList>
            <person name="Wang Z."/>
            <person name="Mir M.A."/>
        </authorList>
    </citation>
    <scope>FUNCTION</scope>
    <source>
        <strain>Chile-9717869</strain>
    </source>
</reference>
<reference key="10">
    <citation type="journal article" date="2019" name="J. Virol.">
        <title>Unique Interferon Pathway Regulation by the Andes Virus Nucleocapsid Protein Is Conferred by Phosphorylation of Serine 386.</title>
        <authorList>
            <person name="Simons M.J."/>
            <person name="Gorbunova E.E."/>
            <person name="Mackow E.R."/>
        </authorList>
    </citation>
    <scope>FUNCTION</scope>
    <scope>MUTAGENESIS OF SER-386</scope>
    <scope>PHOSPHORYLATION AT SER-386</scope>
</reference>
<reference evidence="49" key="11">
    <citation type="journal article" date="2008" name="J. Biol. Chem.">
        <title>NMR structure of the N-terminal coiled coil domain of the Andes hantavirus nucleocapsid protein.</title>
        <authorList>
            <person name="Wang Y."/>
            <person name="Boudreaux D.M."/>
            <person name="Estrada D.F."/>
            <person name="Egan C.W."/>
            <person name="St Jeor S.C."/>
            <person name="De Guzman R.N."/>
        </authorList>
    </citation>
    <scope>STRUCTURE BY NMR OF 1-74</scope>
    <scope>DOMAIN</scope>
    <scope>COILED COIL</scope>
</reference>
<reference evidence="50" key="12">
    <citation type="journal article" date="2016" name="J. Virol.">
        <title>Crystal Structure of the Core Region of Hantavirus Nucleocapsid Protein Reveals the Mechanism for Ribonucleoprotein Complex Formation.</title>
        <authorList>
            <person name="Guo Y."/>
            <person name="Wang W."/>
            <person name="Sun Y."/>
            <person name="Ma C."/>
            <person name="Wang X."/>
            <person name="Wang X."/>
            <person name="Liu P."/>
            <person name="Shen S."/>
            <person name="Li B."/>
            <person name="Lin J."/>
            <person name="Deng F."/>
            <person name="Wang H."/>
            <person name="Lou Z."/>
        </authorList>
    </citation>
    <scope>X-RAY CRYSTALLOGRAPHY (2.25 ANGSTROMS) OF 117-399</scope>
    <scope>SUBUNIT</scope>
    <scope>MUTAGENESIS OF LEU-102; VAL-104; ILE-107; LEU-405; LEU-408 AND LEU-412</scope>
</reference>
<organism>
    <name type="scientific">Andes orthohantavirus</name>
    <name type="common">ANDV</name>
    <name type="synonym">Andes virus</name>
    <dbReference type="NCBI Taxonomy" id="1980456"/>
    <lineage>
        <taxon>Viruses</taxon>
        <taxon>Riboviria</taxon>
        <taxon>Orthornavirae</taxon>
        <taxon>Negarnaviricota</taxon>
        <taxon>Polyploviricotina</taxon>
        <taxon>Ellioviricetes</taxon>
        <taxon>Bunyavirales</taxon>
        <taxon>Hantaviridae</taxon>
        <taxon>Mammantavirinae</taxon>
        <taxon>Orthohantavirus</taxon>
    </lineage>
</organism>
<name>NCAP_ANDV</name>
<comment type="function">
    <text evidence="1 4 6 7 9 10">Encapsidates the genome protecting it from nucleases (Probable). The encapsidated genomic RNA is termed the nucleocapsid (NC) and serves as template for transcription and replication (Probable). The nucleocapsid has a left-handed helical structure (By similarity). As a trimer, specifically binds and acts as a chaperone to unwind the panhandle structure formed by the viral RNA (vRNA) termini (By similarity). Involved in the transcription and replication initiation of vRNA by mediating primer annealing (By similarity). Plays a role in cap snatching by sequestering capped RNAs in P bodies for use by the viral RdRp during transcription initiation (By similarity). Substitutes for the cellular cap-binding complex (eIF4F) to preferentially facilitate the translation of capped mRNAs (By similarity). Initiates the translation by specifically binding to the cap and 40S ribosomal subunit (By similarity). Prevents the viral glycoprotein N (Gn) from autophagy-dependent breakdown maybe by blocking autophagosome formation (By similarity). Inhibits host EIF2AK2/PKR dimerization to prevent PKR-induced translational shutdown in cells and thus the activation of the antiviral state (PubMed:25410857). Inhibits IFN signaling responses directed by the dsRNA sensors RIGI and IFIH1/MDA5, probably by interacting with host E3 ubiquitin ligase TRIM21 (PubMed:24549848). As a consequence, TBK1-directed IRF3 phosphorylation and TBK1 autophosphorylation are inhibited (PubMed:24549848, PubMed:30867297). Also displays sequence-unspecific DNA endonuclease activity (By similarity).</text>
</comment>
<comment type="subunit">
    <text evidence="1 2 3 4 8">Homotrimer (By similarity). Homomultimer (PubMed:26559827). Homomultimerizes and binds to viral genomic RNA to form the nucleocapsid (By similarity). Interacts with host MAP1LC3B; this interaction participates to the protection of Gn from virus-triggered autophagy (By similarity). Interacts with host SNAP29; this interaction participates to the protection of glycoprotein N from virus-triggered autophagy (By similarity). Interacts (via N-terminus) with host RPS19; this interaction probably mediates the loading of the 40S ribosomal subunit on viral capped mRNA during N-mediated translation initiation (By similarity). Interacts with the viral RdRp (By similarity). Interacts with host SUMO1 (via N-terminus) (By similarity). Interacts with host DAXX (By similarity). Interacts with the viral glycoprotein N (via C-terminus) (By similarity). Interacts with the viral glycoprotein C (via C-terminus) (By similarity).</text>
</comment>
<comment type="subcellular location">
    <subcellularLocation>
        <location evidence="1">Virion</location>
    </subcellularLocation>
    <subcellularLocation>
        <location evidence="1">Host cytoplasm</location>
        <location evidence="1">Host perinuclear region</location>
    </subcellularLocation>
    <subcellularLocation>
        <location evidence="1">Host Golgi apparatus</location>
        <location evidence="1">Host cis-Golgi network</location>
    </subcellularLocation>
    <text evidence="1">Internal protein of virus particle.</text>
</comment>
<comment type="domain">
    <text evidence="1 4 5">The N-terminus is required for chaperone activity and, in trimeric form, this region likely serves in high affinity vRNA panhandle recognition (By similarity). The N-terminus also contains a coiled coil region, which probably participates in but is insufficient to initiate N trimerization (PubMed:18687679). The YxxL motif is indispensable for the interaction with host MAP1LC3B (By similarity). The central region is involved in specific RNA-binding (By similarity). Has distinct cap- and RNA-binding sites so it can bind simultaneously both the vRNA and mRNA cap (By similarity).</text>
</comment>
<comment type="similarity">
    <text evidence="10">Belongs to the hantavirus nucleocapsid protein family.</text>
</comment>
<protein>
    <recommendedName>
        <fullName>Nucleoprotein</fullName>
        <ecNumber evidence="4">3.1.-.-</ecNumber>
    </recommendedName>
    <alternativeName>
        <fullName>Nucleocapsid protein</fullName>
        <shortName>Protein N</shortName>
    </alternativeName>
</protein>
<evidence type="ECO:0000250" key="1">
    <source>
        <dbReference type="UniProtKB" id="P05133"/>
    </source>
</evidence>
<evidence type="ECO:0000250" key="2">
    <source>
        <dbReference type="UniProtKB" id="P27313"/>
    </source>
</evidence>
<evidence type="ECO:0000250" key="3">
    <source>
        <dbReference type="UniProtKB" id="Q88918"/>
    </source>
</evidence>
<evidence type="ECO:0000250" key="4">
    <source>
        <dbReference type="UniProtKB" id="Q89462"/>
    </source>
</evidence>
<evidence type="ECO:0000269" key="5">
    <source>
    </source>
</evidence>
<evidence type="ECO:0000269" key="6">
    <source>
    </source>
</evidence>
<evidence type="ECO:0000269" key="7">
    <source>
    </source>
</evidence>
<evidence type="ECO:0000269" key="8">
    <source>
    </source>
</evidence>
<evidence type="ECO:0000269" key="9">
    <source>
    </source>
</evidence>
<evidence type="ECO:0000305" key="10"/>
<evidence type="ECO:0000305" key="11">
    <source>
    </source>
</evidence>
<evidence type="ECO:0000312" key="12">
    <source>
        <dbReference type="EMBL" id="QIQ51415.1"/>
    </source>
</evidence>
<evidence type="ECO:0000312" key="13">
    <source>
        <dbReference type="EMBL" id="QIQ51416.1"/>
    </source>
</evidence>
<evidence type="ECO:0000312" key="14">
    <source>
        <dbReference type="EMBL" id="QIQ51417.1"/>
    </source>
</evidence>
<evidence type="ECO:0000312" key="15">
    <source>
        <dbReference type="EMBL" id="QIQ51419.1"/>
    </source>
</evidence>
<evidence type="ECO:0000312" key="16">
    <source>
        <dbReference type="EMBL" id="QNQ18240.1"/>
    </source>
</evidence>
<evidence type="ECO:0000312" key="17">
    <source>
        <dbReference type="EMBL" id="QNQ18241.1"/>
    </source>
</evidence>
<evidence type="ECO:0000312" key="18">
    <source>
        <dbReference type="EMBL" id="QNQ18242.1"/>
    </source>
</evidence>
<evidence type="ECO:0000312" key="19">
    <source>
        <dbReference type="EMBL" id="QNQ18243.1"/>
    </source>
</evidence>
<evidence type="ECO:0000312" key="20">
    <source>
        <dbReference type="EMBL" id="QNQ18244.1"/>
    </source>
</evidence>
<evidence type="ECO:0000312" key="21">
    <source>
        <dbReference type="EMBL" id="QNQ18245.1"/>
    </source>
</evidence>
<evidence type="ECO:0000312" key="22">
    <source>
        <dbReference type="EMBL" id="QNQ18246.1"/>
    </source>
</evidence>
<evidence type="ECO:0000312" key="23">
    <source>
        <dbReference type="EMBL" id="QNQ18247.1"/>
    </source>
</evidence>
<evidence type="ECO:0000312" key="24">
    <source>
        <dbReference type="EMBL" id="QNQ18248.1"/>
    </source>
</evidence>
<evidence type="ECO:0000312" key="25">
    <source>
        <dbReference type="EMBL" id="QNQ18249.1"/>
    </source>
</evidence>
<evidence type="ECO:0000312" key="26">
    <source>
        <dbReference type="EMBL" id="QNQ18250.1"/>
    </source>
</evidence>
<evidence type="ECO:0000312" key="27">
    <source>
        <dbReference type="EMBL" id="QNQ18251.1"/>
    </source>
</evidence>
<evidence type="ECO:0000312" key="28">
    <source>
        <dbReference type="EMBL" id="QNQ18252.1"/>
    </source>
</evidence>
<evidence type="ECO:0000312" key="29">
    <source>
        <dbReference type="EMBL" id="QNQ18253.1"/>
    </source>
</evidence>
<evidence type="ECO:0000312" key="30">
    <source>
        <dbReference type="EMBL" id="QNQ18254.1"/>
    </source>
</evidence>
<evidence type="ECO:0000312" key="31">
    <source>
        <dbReference type="EMBL" id="QNQ18255.1"/>
    </source>
</evidence>
<evidence type="ECO:0000312" key="32">
    <source>
        <dbReference type="EMBL" id="QNQ18256.1"/>
    </source>
</evidence>
<evidence type="ECO:0000312" key="33">
    <source>
        <dbReference type="EMBL" id="QNQ18257.1"/>
    </source>
</evidence>
<evidence type="ECO:0000312" key="34">
    <source>
        <dbReference type="EMBL" id="QNQ18258.1"/>
    </source>
</evidence>
<evidence type="ECO:0000312" key="35">
    <source>
        <dbReference type="EMBL" id="QNQ18259.1"/>
    </source>
</evidence>
<evidence type="ECO:0000312" key="36">
    <source>
        <dbReference type="EMBL" id="QNQ18260.1"/>
    </source>
</evidence>
<evidence type="ECO:0000312" key="37">
    <source>
        <dbReference type="EMBL" id="QNQ18261.1"/>
    </source>
</evidence>
<evidence type="ECO:0000312" key="38">
    <source>
        <dbReference type="EMBL" id="QNQ18262.1"/>
    </source>
</evidence>
<evidence type="ECO:0000312" key="39">
    <source>
        <dbReference type="EMBL" id="QNQ18263.1"/>
    </source>
</evidence>
<evidence type="ECO:0000312" key="40">
    <source>
        <dbReference type="EMBL" id="QNQ18264.1"/>
    </source>
</evidence>
<evidence type="ECO:0000312" key="41">
    <source>
        <dbReference type="EMBL" id="QNQ18265.1"/>
    </source>
</evidence>
<evidence type="ECO:0000312" key="42">
    <source>
        <dbReference type="EMBL" id="QNQ18266.1"/>
    </source>
</evidence>
<evidence type="ECO:0000312" key="43">
    <source>
        <dbReference type="EMBL" id="QNQ18267.1"/>
    </source>
</evidence>
<evidence type="ECO:0000312" key="44">
    <source>
        <dbReference type="EMBL" id="QNQ18268.1"/>
    </source>
</evidence>
<evidence type="ECO:0000312" key="45">
    <source>
        <dbReference type="EMBL" id="QNQ18269.1"/>
    </source>
</evidence>
<evidence type="ECO:0000312" key="46">
    <source>
        <dbReference type="EMBL" id="QNQ18270.1"/>
    </source>
</evidence>
<evidence type="ECO:0000312" key="47">
    <source>
        <dbReference type="EMBL" id="QNQ18272.1"/>
    </source>
</evidence>
<evidence type="ECO:0000312" key="48">
    <source>
        <dbReference type="EMBL" id="QNQ18273.1"/>
    </source>
</evidence>
<evidence type="ECO:0007744" key="49">
    <source>
        <dbReference type="PDB" id="2K48"/>
    </source>
</evidence>
<evidence type="ECO:0007744" key="50">
    <source>
        <dbReference type="PDB" id="5E04"/>
    </source>
</evidence>
<evidence type="ECO:0007829" key="51">
    <source>
        <dbReference type="PDB" id="2K48"/>
    </source>
</evidence>
<evidence type="ECO:0007829" key="52">
    <source>
        <dbReference type="PDB" id="5E04"/>
    </source>
</evidence>
<sequence length="428" mass="48042">MSTLQELQENITAHEQQLVTARQKLKDAEKAVEVDPDDVNKSTLQSRRAAVSTLETKLGELKRQLADLVAAQKLATKPVDPTGLEPDDHLKEKSSLRYGNVLDVNSIDLEEPSGQTADWKAIGAYILGFAIPIILKALYMLSTRGRQTVKDNKGTRIRFKDDSSFEEVNGIRKPKHLYVSMPTAQSTMKAEEITPGRFRTIACGLFPAQVKARNIISPVMGVIGFGFFVKDWMDRIEEFLAAECPFLPKPKVASEAFMSTNKMYFLNRQRQVNESKVQDIIDLIDHAETESATLFTEIATPHSVWVFACAPDRCPPTALYVAGVPELGAFFSILQDMRNTIMASKSVGTAEEKLKKKSAFYQSYLRRTQSMGIQLDQKIIILYMLSWGKEAVNHFHLGDDMDPELRQLAQSLIDTKVKEISNQEPLKL</sequence>
<dbReference type="EC" id="3.1.-.-" evidence="4"/>
<dbReference type="EMBL" id="AF004660">
    <property type="protein sequence ID" value="AAB69170.1"/>
    <property type="molecule type" value="Genomic_RNA"/>
</dbReference>
<dbReference type="EMBL" id="AF291702">
    <property type="protein sequence ID" value="AAG22531.1"/>
    <property type="molecule type" value="Genomic_RNA"/>
</dbReference>
<dbReference type="EMBL" id="AF324902">
    <property type="protein sequence ID" value="AAK14323.1"/>
    <property type="molecule type" value="Genomic_RNA"/>
</dbReference>
<dbReference type="EMBL" id="AY228237">
    <property type="protein sequence ID" value="AAO86636.1"/>
    <property type="molecule type" value="Genomic_RNA"/>
</dbReference>
<dbReference type="EMBL" id="MN850083">
    <property type="protein sequence ID" value="QIQ51415.1"/>
    <property type="molecule type" value="Viral_cRNA"/>
</dbReference>
<dbReference type="EMBL" id="MN850084">
    <property type="protein sequence ID" value="QIQ51416.1"/>
    <property type="molecule type" value="Viral_cRNA"/>
</dbReference>
<dbReference type="EMBL" id="MN850085">
    <property type="protein sequence ID" value="QIQ51417.1"/>
    <property type="molecule type" value="Viral_cRNA"/>
</dbReference>
<dbReference type="EMBL" id="MN850087">
    <property type="protein sequence ID" value="QIQ51419.1"/>
    <property type="molecule type" value="Viral_cRNA"/>
</dbReference>
<dbReference type="EMBL" id="MN258223">
    <property type="protein sequence ID" value="QNQ18240.1"/>
    <property type="molecule type" value="Viral_cRNA"/>
</dbReference>
<dbReference type="EMBL" id="MN258224">
    <property type="protein sequence ID" value="QNQ18241.1"/>
    <property type="molecule type" value="Viral_cRNA"/>
</dbReference>
<dbReference type="EMBL" id="MN258225">
    <property type="protein sequence ID" value="QNQ18242.1"/>
    <property type="molecule type" value="Viral_cRNA"/>
</dbReference>
<dbReference type="EMBL" id="MN258226">
    <property type="protein sequence ID" value="QNQ18243.1"/>
    <property type="molecule type" value="Viral_cRNA"/>
</dbReference>
<dbReference type="EMBL" id="MN258227">
    <property type="protein sequence ID" value="QNQ18244.1"/>
    <property type="molecule type" value="Viral_cRNA"/>
</dbReference>
<dbReference type="EMBL" id="MN258228">
    <property type="protein sequence ID" value="QNQ18245.1"/>
    <property type="molecule type" value="Viral_cRNA"/>
</dbReference>
<dbReference type="EMBL" id="MN258229">
    <property type="protein sequence ID" value="QNQ18246.1"/>
    <property type="molecule type" value="Viral_cRNA"/>
</dbReference>
<dbReference type="EMBL" id="MN258230">
    <property type="protein sequence ID" value="QNQ18247.1"/>
    <property type="molecule type" value="Viral_cRNA"/>
</dbReference>
<dbReference type="EMBL" id="MN258231">
    <property type="protein sequence ID" value="QNQ18248.1"/>
    <property type="molecule type" value="Viral_cRNA"/>
</dbReference>
<dbReference type="EMBL" id="MN258232">
    <property type="protein sequence ID" value="QNQ18249.1"/>
    <property type="molecule type" value="Viral_cRNA"/>
</dbReference>
<dbReference type="EMBL" id="MN258233">
    <property type="protein sequence ID" value="QNQ18250.1"/>
    <property type="molecule type" value="Viral_cRNA"/>
</dbReference>
<dbReference type="EMBL" id="MN258234">
    <property type="protein sequence ID" value="QNQ18251.1"/>
    <property type="molecule type" value="Viral_cRNA"/>
</dbReference>
<dbReference type="EMBL" id="MN258235">
    <property type="protein sequence ID" value="QNQ18252.1"/>
    <property type="molecule type" value="Viral_cRNA"/>
</dbReference>
<dbReference type="EMBL" id="MN258236">
    <property type="protein sequence ID" value="QNQ18253.1"/>
    <property type="molecule type" value="Viral_cRNA"/>
</dbReference>
<dbReference type="EMBL" id="MN258237">
    <property type="protein sequence ID" value="QNQ18254.1"/>
    <property type="molecule type" value="Viral_cRNA"/>
</dbReference>
<dbReference type="EMBL" id="MN258238">
    <property type="protein sequence ID" value="QNQ18255.1"/>
    <property type="molecule type" value="Viral_cRNA"/>
</dbReference>
<dbReference type="EMBL" id="MN258239">
    <property type="protein sequence ID" value="QNQ18256.1"/>
    <property type="molecule type" value="Viral_cRNA"/>
</dbReference>
<dbReference type="EMBL" id="MN258240">
    <property type="protein sequence ID" value="QNQ18257.1"/>
    <property type="molecule type" value="Viral_cRNA"/>
</dbReference>
<dbReference type="EMBL" id="MN258241">
    <property type="protein sequence ID" value="QNQ18258.1"/>
    <property type="molecule type" value="Viral_cRNA"/>
</dbReference>
<dbReference type="EMBL" id="MN258242">
    <property type="protein sequence ID" value="QNQ18259.1"/>
    <property type="molecule type" value="Viral_cRNA"/>
</dbReference>
<dbReference type="EMBL" id="MN258243">
    <property type="protein sequence ID" value="QNQ18260.1"/>
    <property type="molecule type" value="Viral_cRNA"/>
</dbReference>
<dbReference type="EMBL" id="MN258244">
    <property type="protein sequence ID" value="QNQ18261.1"/>
    <property type="molecule type" value="Viral_cRNA"/>
</dbReference>
<dbReference type="EMBL" id="MN258245">
    <property type="protein sequence ID" value="QNQ18262.1"/>
    <property type="molecule type" value="Viral_cRNA"/>
</dbReference>
<dbReference type="EMBL" id="MN258246">
    <property type="protein sequence ID" value="QNQ18263.1"/>
    <property type="molecule type" value="Viral_cRNA"/>
</dbReference>
<dbReference type="EMBL" id="MN258247">
    <property type="protein sequence ID" value="QNQ18264.1"/>
    <property type="molecule type" value="Viral_cRNA"/>
</dbReference>
<dbReference type="EMBL" id="MN258248">
    <property type="protein sequence ID" value="QNQ18265.1"/>
    <property type="molecule type" value="Viral_cRNA"/>
</dbReference>
<dbReference type="EMBL" id="MN258249">
    <property type="protein sequence ID" value="QNQ18266.1"/>
    <property type="molecule type" value="Viral_cRNA"/>
</dbReference>
<dbReference type="EMBL" id="MN258250">
    <property type="protein sequence ID" value="QNQ18267.1"/>
    <property type="molecule type" value="Viral_cRNA"/>
</dbReference>
<dbReference type="EMBL" id="MN258251">
    <property type="protein sequence ID" value="QNQ18268.1"/>
    <property type="molecule type" value="Viral_cRNA"/>
</dbReference>
<dbReference type="EMBL" id="MN258252">
    <property type="protein sequence ID" value="QNQ18269.1"/>
    <property type="molecule type" value="Viral_cRNA"/>
</dbReference>
<dbReference type="EMBL" id="MN258253">
    <property type="protein sequence ID" value="QNQ18270.1"/>
    <property type="molecule type" value="Viral_cRNA"/>
</dbReference>
<dbReference type="EMBL" id="MN258255">
    <property type="protein sequence ID" value="QNQ18272.1"/>
    <property type="molecule type" value="Viral_cRNA"/>
</dbReference>
<dbReference type="EMBL" id="MN258256">
    <property type="protein sequence ID" value="QNQ18273.1"/>
    <property type="molecule type" value="Viral_cRNA"/>
</dbReference>
<dbReference type="PDB" id="2K48">
    <property type="method" value="NMR"/>
    <property type="chains" value="A=1-74"/>
</dbReference>
<dbReference type="PDB" id="5E04">
    <property type="method" value="X-ray"/>
    <property type="resolution" value="2.25 A"/>
    <property type="chains" value="A/B=117-399"/>
</dbReference>
<dbReference type="PDBsum" id="2K48"/>
<dbReference type="PDBsum" id="5E04"/>
<dbReference type="SMR" id="O36307"/>
<dbReference type="iPTMnet" id="O36307"/>
<dbReference type="KEGG" id="vg:991232"/>
<dbReference type="OrthoDB" id="2640at10239"/>
<dbReference type="EvolutionaryTrace" id="O36307"/>
<dbReference type="GO" id="GO:0044177">
    <property type="term" value="C:host cell Golgi apparatus"/>
    <property type="evidence" value="ECO:0007669"/>
    <property type="project" value="UniProtKB-SubCell"/>
</dbReference>
<dbReference type="GO" id="GO:0044220">
    <property type="term" value="C:host cell perinuclear region of cytoplasm"/>
    <property type="evidence" value="ECO:0007669"/>
    <property type="project" value="UniProtKB-SubCell"/>
</dbReference>
<dbReference type="GO" id="GO:1990904">
    <property type="term" value="C:ribonucleoprotein complex"/>
    <property type="evidence" value="ECO:0007669"/>
    <property type="project" value="UniProtKB-KW"/>
</dbReference>
<dbReference type="GO" id="GO:0019013">
    <property type="term" value="C:viral nucleocapsid"/>
    <property type="evidence" value="ECO:0007669"/>
    <property type="project" value="UniProtKB-KW"/>
</dbReference>
<dbReference type="GO" id="GO:0004519">
    <property type="term" value="F:endonuclease activity"/>
    <property type="evidence" value="ECO:0007669"/>
    <property type="project" value="UniProtKB-KW"/>
</dbReference>
<dbReference type="GO" id="GO:0003723">
    <property type="term" value="F:RNA binding"/>
    <property type="evidence" value="ECO:0007669"/>
    <property type="project" value="UniProtKB-KW"/>
</dbReference>
<dbReference type="GO" id="GO:0052170">
    <property type="term" value="P:symbiont-mediated suppression of host innate immune response"/>
    <property type="evidence" value="ECO:0007669"/>
    <property type="project" value="UniProtKB-KW"/>
</dbReference>
<dbReference type="Gene3D" id="1.20.58.90">
    <property type="match status" value="1"/>
</dbReference>
<dbReference type="InterPro" id="IPR002214">
    <property type="entry name" value="Hanta_nucleocap"/>
</dbReference>
<dbReference type="Pfam" id="PF00846">
    <property type="entry name" value="Hanta_nucleocap"/>
    <property type="match status" value="1"/>
</dbReference>
<dbReference type="PIRSF" id="PIRSF003949">
    <property type="entry name" value="N_HantaV"/>
    <property type="match status" value="1"/>
</dbReference>
<dbReference type="SUPFAM" id="SSF46596">
    <property type="entry name" value="Eukaryotic DNA topoisomerase I, dispensable insert domain"/>
    <property type="match status" value="1"/>
</dbReference>
<gene>
    <name type="primary">N</name>
</gene>
<feature type="chain" id="PRO_0000455186" description="Nucleoprotein">
    <location>
        <begin position="1"/>
        <end position="428"/>
    </location>
</feature>
<feature type="region of interest" description="Viral panhandle binding" evidence="4">
    <location>
        <begin position="1"/>
        <end position="175"/>
    </location>
</feature>
<feature type="region of interest" description="Chaperone activity" evidence="4">
    <location>
        <begin position="1"/>
        <end position="100"/>
    </location>
</feature>
<feature type="region of interest" description="Homomultimerization" evidence="3">
    <location>
        <begin position="1"/>
        <end position="79"/>
    </location>
</feature>
<feature type="region of interest" description="RdRP binding" evidence="4">
    <location>
        <begin position="1"/>
        <end position="50"/>
    </location>
</feature>
<feature type="region of interest" description="Interaction with glycoprotein N" evidence="3">
    <location>
        <begin position="80"/>
        <end position="248"/>
    </location>
</feature>
<feature type="region of interest" description="Homomultimerization" evidence="11">
    <location>
        <begin position="100"/>
        <end position="125"/>
    </location>
</feature>
<feature type="region of interest" description="Interaction with host RPS19" evidence="4">
    <location>
        <begin position="150"/>
        <end position="175"/>
    </location>
</feature>
<feature type="region of interest" description="Viral RNA-binding" evidence="1">
    <location>
        <begin position="175"/>
        <end position="217"/>
    </location>
</feature>
<feature type="region of interest" description="Interaction with host UBE2I/UBC9" evidence="1">
    <location>
        <begin position="188"/>
        <end position="191"/>
    </location>
</feature>
<feature type="region of interest" description="Involved in the inhibition of IFN induction" evidence="9">
    <location>
        <begin position="252"/>
        <end position="296"/>
    </location>
</feature>
<feature type="region of interest" description="Interaction with host DAXX" evidence="2">
    <location>
        <begin position="372"/>
        <end position="428"/>
    </location>
</feature>
<feature type="region of interest" description="Homomultimerization" evidence="11">
    <location>
        <begin position="372"/>
        <end position="420"/>
    </location>
</feature>
<feature type="coiled-coil region" evidence="5">
    <location>
        <begin position="4"/>
        <end position="71"/>
    </location>
</feature>
<feature type="short sequence motif" description="YxxL" evidence="1">
    <location>
        <begin position="178"/>
        <end position="181"/>
    </location>
</feature>
<feature type="site" description="Important for the endonuclease activity" evidence="4">
    <location>
        <position position="88"/>
    </location>
</feature>
<feature type="site" description="Important for the endonuclease activity" evidence="4">
    <location>
        <position position="103"/>
    </location>
</feature>
<feature type="site" description="Involved in the inhibition of IFN induction" evidence="9">
    <location>
        <position position="386"/>
    </location>
</feature>
<feature type="modified residue" description="Phosphoserine" evidence="9">
    <location>
        <position position="386"/>
    </location>
</feature>
<feature type="sequence variant" description="In strain: CHI-7913.">
    <original>S</original>
    <variation>N</variation>
    <location>
        <position position="46"/>
    </location>
</feature>
<feature type="sequence variant" description="In strain: CHI-7913.">
    <original>T</original>
    <variation>A</variation>
    <location>
        <position position="148"/>
    </location>
</feature>
<feature type="mutagenesis site" description="Loss of homotypic contacts." evidence="8">
    <original>L</original>
    <variation>A</variation>
    <location>
        <position position="102"/>
    </location>
</feature>
<feature type="mutagenesis site" description="Loss of homotypic contacts." evidence="8">
    <original>V</original>
    <variation>A</variation>
    <location>
        <position position="104"/>
    </location>
</feature>
<feature type="mutagenesis site" description="Loss of homotypic contacts." evidence="8">
    <original>I</original>
    <variation>A</variation>
    <location>
        <position position="107"/>
    </location>
</feature>
<feature type="mutagenesis site" description="Complete loss of inhibition of MDA5-directed ISRE or IFN transcriptional responses." evidence="9">
    <original>S</original>
    <variation>H</variation>
    <location>
        <position position="386"/>
    </location>
</feature>
<feature type="mutagenesis site" description="Loss of homotypic contacts." evidence="8">
    <original>L</original>
    <variation>A</variation>
    <location>
        <position position="405"/>
    </location>
</feature>
<feature type="mutagenesis site" description="Loss of homotypic contacts." evidence="8">
    <original>L</original>
    <variation>A</variation>
    <location>
        <position position="408"/>
    </location>
</feature>
<feature type="mutagenesis site" description="Loss of homotypic contacts." evidence="8">
    <original>L</original>
    <variation>A</variation>
    <location>
        <position position="412"/>
    </location>
</feature>
<feature type="helix" evidence="51">
    <location>
        <begin position="1"/>
        <end position="34"/>
    </location>
</feature>
<feature type="helix" evidence="51">
    <location>
        <begin position="38"/>
        <end position="72"/>
    </location>
</feature>
<feature type="helix" evidence="52">
    <location>
        <begin position="119"/>
        <end position="127"/>
    </location>
</feature>
<feature type="helix" evidence="52">
    <location>
        <begin position="131"/>
        <end position="143"/>
    </location>
</feature>
<feature type="helix" evidence="52">
    <location>
        <begin position="145"/>
        <end position="150"/>
    </location>
</feature>
<feature type="strand" evidence="52">
    <location>
        <begin position="154"/>
        <end position="159"/>
    </location>
</feature>
<feature type="strand" evidence="52">
    <location>
        <begin position="165"/>
        <end position="167"/>
    </location>
</feature>
<feature type="strand" evidence="52">
    <location>
        <begin position="169"/>
        <end position="174"/>
    </location>
</feature>
<feature type="strand" evidence="52">
    <location>
        <begin position="177"/>
        <end position="180"/>
    </location>
</feature>
<feature type="helix" evidence="52">
    <location>
        <begin position="195"/>
        <end position="205"/>
    </location>
</feature>
<feature type="helix" evidence="52">
    <location>
        <begin position="207"/>
        <end position="212"/>
    </location>
</feature>
<feature type="helix" evidence="52">
    <location>
        <begin position="218"/>
        <end position="221"/>
    </location>
</feature>
<feature type="turn" evidence="52">
    <location>
        <begin position="222"/>
        <end position="224"/>
    </location>
</feature>
<feature type="helix" evidence="52">
    <location>
        <begin position="225"/>
        <end position="228"/>
    </location>
</feature>
<feature type="turn" evidence="52">
    <location>
        <begin position="229"/>
        <end position="231"/>
    </location>
</feature>
<feature type="helix" evidence="52">
    <location>
        <begin position="232"/>
        <end position="241"/>
    </location>
</feature>
<feature type="helix" evidence="52">
    <location>
        <begin position="256"/>
        <end position="259"/>
    </location>
</feature>
<feature type="helix" evidence="52">
    <location>
        <begin position="261"/>
        <end position="272"/>
    </location>
</feature>
<feature type="helix" evidence="52">
    <location>
        <begin position="273"/>
        <end position="275"/>
    </location>
</feature>
<feature type="helix" evidence="52">
    <location>
        <begin position="278"/>
        <end position="288"/>
    </location>
</feature>
<feature type="turn" evidence="52">
    <location>
        <begin position="289"/>
        <end position="291"/>
    </location>
</feature>
<feature type="strand" evidence="52">
    <location>
        <begin position="296"/>
        <end position="300"/>
    </location>
</feature>
<feature type="helix" evidence="52">
    <location>
        <begin position="303"/>
        <end position="307"/>
    </location>
</feature>
<feature type="helix" evidence="52">
    <location>
        <begin position="316"/>
        <end position="318"/>
    </location>
</feature>
<feature type="helix" evidence="52">
    <location>
        <begin position="324"/>
        <end position="344"/>
    </location>
</feature>
<feature type="turn" evidence="52">
    <location>
        <begin position="350"/>
        <end position="356"/>
    </location>
</feature>
<feature type="helix" evidence="52">
    <location>
        <begin position="360"/>
        <end position="369"/>
    </location>
</feature>
<feature type="helix" evidence="52">
    <location>
        <begin position="377"/>
        <end position="392"/>
    </location>
</feature>